<sequence length="591" mass="68177">MKDHIKQKLTVLPDQPGCYLMKDRQGTIIYVGKAKVLKNRVRSYFTGSHDAKTQRLVGEIADFEYIVTSSNIEALILEMNLIKKHDPKYNVMLKDDKSYPYLKLTNEEHPRLVTTRKLKKDGGKYFGPYPNAGAANETKKLLDRLYPLRKCRTLPDKVCLYYHIGQCLAPCVYEVTPEQNEQMVQEITRFLKYGHKEVKVELEKKMHKAAEELNFERAKELRDTLGYMEAVMEKQTMMVNDRVDRDVFGYAYDKGWMCVQVFFVRQGKLIERDVSIFPFYKEAEEDFLTFIGQFYLQKDHIKPGEVLLPAGTDAALVEQLLDVSVHIPKRGKKKELVDVAMRNATMALKEKFALIERNEERTIKAVEQLGEAMGIPTPYRIEAFDNSNIQGTDPVSAMVAFIDGKPNKKEYRKYKIKTVTGPDDYESMREVVRRRYVRLLKEQRSLPDLIVIDGGKGQIAAAQEILHDELGLSIPVCGLAKDEKHRTSQLLLGDPPQVVPLKRDSHEFYLLQRIQDEVHRFALTFHRQTRSKTFFQSVLDDVPGIGEKRKRQLLKHFGSVKKMKEASIDDFLALSIPKSVAETLYNKLQTK</sequence>
<comment type="function">
    <text evidence="1">The UvrABC repair system catalyzes the recognition and processing of DNA lesions. UvrC both incises the 5' and 3' sides of the lesion. The N-terminal half is responsible for the 3' incision and the C-terminal half is responsible for the 5' incision.</text>
</comment>
<comment type="subunit">
    <text evidence="1">Interacts with UvrB in an incision complex.</text>
</comment>
<comment type="subcellular location">
    <subcellularLocation>
        <location evidence="1">Cytoplasm</location>
    </subcellularLocation>
</comment>
<comment type="similarity">
    <text evidence="1">Belongs to the UvrC family.</text>
</comment>
<reference key="1">
    <citation type="journal article" date="2000" name="Nucleic Acids Res.">
        <title>Complete genome sequence of the alkaliphilic bacterium Bacillus halodurans and genomic sequence comparison with Bacillus subtilis.</title>
        <authorList>
            <person name="Takami H."/>
            <person name="Nakasone K."/>
            <person name="Takaki Y."/>
            <person name="Maeno G."/>
            <person name="Sasaki R."/>
            <person name="Masui N."/>
            <person name="Fuji F."/>
            <person name="Hirama C."/>
            <person name="Nakamura Y."/>
            <person name="Ogasawara N."/>
            <person name="Kuhara S."/>
            <person name="Horikoshi K."/>
        </authorList>
    </citation>
    <scope>NUCLEOTIDE SEQUENCE [LARGE SCALE GENOMIC DNA]</scope>
    <source>
        <strain>ATCC BAA-125 / DSM 18197 / FERM 7344 / JCM 9153 / C-125</strain>
    </source>
</reference>
<proteinExistence type="inferred from homology"/>
<evidence type="ECO:0000255" key="1">
    <source>
        <dbReference type="HAMAP-Rule" id="MF_00203"/>
    </source>
</evidence>
<organism>
    <name type="scientific">Halalkalibacterium halodurans (strain ATCC BAA-125 / DSM 18197 / FERM 7344 / JCM 9153 / C-125)</name>
    <name type="common">Bacillus halodurans</name>
    <dbReference type="NCBI Taxonomy" id="272558"/>
    <lineage>
        <taxon>Bacteria</taxon>
        <taxon>Bacillati</taxon>
        <taxon>Bacillota</taxon>
        <taxon>Bacilli</taxon>
        <taxon>Bacillales</taxon>
        <taxon>Bacillaceae</taxon>
        <taxon>Halalkalibacterium (ex Joshi et al. 2022)</taxon>
    </lineage>
</organism>
<feature type="chain" id="PRO_0000138287" description="UvrABC system protein C">
    <location>
        <begin position="1"/>
        <end position="591"/>
    </location>
</feature>
<feature type="domain" description="GIY-YIG" evidence="1">
    <location>
        <begin position="14"/>
        <end position="91"/>
    </location>
</feature>
<feature type="domain" description="UVR" evidence="1">
    <location>
        <begin position="196"/>
        <end position="231"/>
    </location>
</feature>
<protein>
    <recommendedName>
        <fullName evidence="1">UvrABC system protein C</fullName>
        <shortName evidence="1">Protein UvrC</shortName>
    </recommendedName>
    <alternativeName>
        <fullName evidence="1">Excinuclease ABC subunit C</fullName>
    </alternativeName>
</protein>
<dbReference type="EMBL" id="BA000004">
    <property type="protein sequence ID" value="BAB06816.1"/>
    <property type="molecule type" value="Genomic_DNA"/>
</dbReference>
<dbReference type="PIR" id="A84037">
    <property type="entry name" value="A84037"/>
</dbReference>
<dbReference type="RefSeq" id="WP_010899241.1">
    <property type="nucleotide sequence ID" value="NC_002570.2"/>
</dbReference>
<dbReference type="SMR" id="Q9K8A9"/>
<dbReference type="STRING" id="272558.gene:10729009"/>
<dbReference type="KEGG" id="bha:BH3097"/>
<dbReference type="eggNOG" id="COG0322">
    <property type="taxonomic scope" value="Bacteria"/>
</dbReference>
<dbReference type="HOGENOM" id="CLU_014841_3_2_9"/>
<dbReference type="OrthoDB" id="9804933at2"/>
<dbReference type="Proteomes" id="UP000001258">
    <property type="component" value="Chromosome"/>
</dbReference>
<dbReference type="GO" id="GO:0005737">
    <property type="term" value="C:cytoplasm"/>
    <property type="evidence" value="ECO:0007669"/>
    <property type="project" value="UniProtKB-SubCell"/>
</dbReference>
<dbReference type="GO" id="GO:0009380">
    <property type="term" value="C:excinuclease repair complex"/>
    <property type="evidence" value="ECO:0007669"/>
    <property type="project" value="InterPro"/>
</dbReference>
<dbReference type="GO" id="GO:0003677">
    <property type="term" value="F:DNA binding"/>
    <property type="evidence" value="ECO:0007669"/>
    <property type="project" value="UniProtKB-UniRule"/>
</dbReference>
<dbReference type="GO" id="GO:0009381">
    <property type="term" value="F:excinuclease ABC activity"/>
    <property type="evidence" value="ECO:0007669"/>
    <property type="project" value="UniProtKB-UniRule"/>
</dbReference>
<dbReference type="GO" id="GO:0006289">
    <property type="term" value="P:nucleotide-excision repair"/>
    <property type="evidence" value="ECO:0007669"/>
    <property type="project" value="UniProtKB-UniRule"/>
</dbReference>
<dbReference type="GO" id="GO:0009432">
    <property type="term" value="P:SOS response"/>
    <property type="evidence" value="ECO:0007669"/>
    <property type="project" value="UniProtKB-UniRule"/>
</dbReference>
<dbReference type="CDD" id="cd10434">
    <property type="entry name" value="GIY-YIG_UvrC_Cho"/>
    <property type="match status" value="1"/>
</dbReference>
<dbReference type="FunFam" id="3.30.420.340:FF:000002">
    <property type="entry name" value="UvrABC system protein C"/>
    <property type="match status" value="1"/>
</dbReference>
<dbReference type="FunFam" id="3.40.1440.10:FF:000001">
    <property type="entry name" value="UvrABC system protein C"/>
    <property type="match status" value="1"/>
</dbReference>
<dbReference type="Gene3D" id="1.10.150.20">
    <property type="entry name" value="5' to 3' exonuclease, C-terminal subdomain"/>
    <property type="match status" value="1"/>
</dbReference>
<dbReference type="Gene3D" id="3.40.1440.10">
    <property type="entry name" value="GIY-YIG endonuclease"/>
    <property type="match status" value="1"/>
</dbReference>
<dbReference type="Gene3D" id="4.10.860.10">
    <property type="entry name" value="UVR domain"/>
    <property type="match status" value="1"/>
</dbReference>
<dbReference type="Gene3D" id="3.30.420.340">
    <property type="entry name" value="UvrC, RNAse H endonuclease domain"/>
    <property type="match status" value="1"/>
</dbReference>
<dbReference type="HAMAP" id="MF_00203">
    <property type="entry name" value="UvrC"/>
    <property type="match status" value="1"/>
</dbReference>
<dbReference type="InterPro" id="IPR000305">
    <property type="entry name" value="GIY-YIG_endonuc"/>
</dbReference>
<dbReference type="InterPro" id="IPR035901">
    <property type="entry name" value="GIY-YIG_endonuc_sf"/>
</dbReference>
<dbReference type="InterPro" id="IPR047296">
    <property type="entry name" value="GIY-YIG_UvrC_Cho"/>
</dbReference>
<dbReference type="InterPro" id="IPR010994">
    <property type="entry name" value="RuvA_2-like"/>
</dbReference>
<dbReference type="InterPro" id="IPR001943">
    <property type="entry name" value="UVR_dom"/>
</dbReference>
<dbReference type="InterPro" id="IPR036876">
    <property type="entry name" value="UVR_dom_sf"/>
</dbReference>
<dbReference type="InterPro" id="IPR050066">
    <property type="entry name" value="UvrABC_protein_C"/>
</dbReference>
<dbReference type="InterPro" id="IPR004791">
    <property type="entry name" value="UvrC"/>
</dbReference>
<dbReference type="InterPro" id="IPR001162">
    <property type="entry name" value="UvrC_RNase_H_dom"/>
</dbReference>
<dbReference type="InterPro" id="IPR038476">
    <property type="entry name" value="UvrC_RNase_H_dom_sf"/>
</dbReference>
<dbReference type="NCBIfam" id="NF001824">
    <property type="entry name" value="PRK00558.1-5"/>
    <property type="match status" value="1"/>
</dbReference>
<dbReference type="NCBIfam" id="TIGR00194">
    <property type="entry name" value="uvrC"/>
    <property type="match status" value="1"/>
</dbReference>
<dbReference type="PANTHER" id="PTHR30562:SF1">
    <property type="entry name" value="UVRABC SYSTEM PROTEIN C"/>
    <property type="match status" value="1"/>
</dbReference>
<dbReference type="PANTHER" id="PTHR30562">
    <property type="entry name" value="UVRC/OXIDOREDUCTASE"/>
    <property type="match status" value="1"/>
</dbReference>
<dbReference type="Pfam" id="PF01541">
    <property type="entry name" value="GIY-YIG"/>
    <property type="match status" value="1"/>
</dbReference>
<dbReference type="Pfam" id="PF02151">
    <property type="entry name" value="UVR"/>
    <property type="match status" value="1"/>
</dbReference>
<dbReference type="Pfam" id="PF22920">
    <property type="entry name" value="UvrC_RNaseH"/>
    <property type="match status" value="1"/>
</dbReference>
<dbReference type="Pfam" id="PF08459">
    <property type="entry name" value="UvrC_RNaseH_dom"/>
    <property type="match status" value="1"/>
</dbReference>
<dbReference type="SMART" id="SM00465">
    <property type="entry name" value="GIYc"/>
    <property type="match status" value="1"/>
</dbReference>
<dbReference type="SUPFAM" id="SSF46600">
    <property type="entry name" value="C-terminal UvrC-binding domain of UvrB"/>
    <property type="match status" value="1"/>
</dbReference>
<dbReference type="SUPFAM" id="SSF82771">
    <property type="entry name" value="GIY-YIG endonuclease"/>
    <property type="match status" value="1"/>
</dbReference>
<dbReference type="SUPFAM" id="SSF47781">
    <property type="entry name" value="RuvA domain 2-like"/>
    <property type="match status" value="1"/>
</dbReference>
<dbReference type="PROSITE" id="PS50164">
    <property type="entry name" value="GIY_YIG"/>
    <property type="match status" value="1"/>
</dbReference>
<dbReference type="PROSITE" id="PS50151">
    <property type="entry name" value="UVR"/>
    <property type="match status" value="1"/>
</dbReference>
<dbReference type="PROSITE" id="PS50165">
    <property type="entry name" value="UVRC"/>
    <property type="match status" value="1"/>
</dbReference>
<keyword id="KW-0963">Cytoplasm</keyword>
<keyword id="KW-0227">DNA damage</keyword>
<keyword id="KW-0228">DNA excision</keyword>
<keyword id="KW-0234">DNA repair</keyword>
<keyword id="KW-0267">Excision nuclease</keyword>
<keyword id="KW-1185">Reference proteome</keyword>
<keyword id="KW-0742">SOS response</keyword>
<name>UVRC_HALH5</name>
<gene>
    <name evidence="1" type="primary">uvrC</name>
    <name type="ordered locus">BH3097</name>
</gene>
<accession>Q9K8A9</accession>